<accession>Q5UAW9</accession>
<accession>A2A334</accession>
<accession>Q8WWB8</accession>
<accession>Q9HA73</accession>
<protein>
    <recommendedName>
        <fullName>G-protein coupled receptor 157</fullName>
    </recommendedName>
</protein>
<dbReference type="EMBL" id="AY768808">
    <property type="protein sequence ID" value="AAV35060.1"/>
    <property type="molecule type" value="mRNA"/>
</dbReference>
<dbReference type="EMBL" id="AL158048">
    <property type="status" value="NOT_ANNOTATED_CDS"/>
    <property type="molecule type" value="Genomic_DNA"/>
</dbReference>
<dbReference type="EMBL" id="AK022194">
    <property type="protein sequence ID" value="BAB13982.1"/>
    <property type="status" value="ALT_SEQ"/>
    <property type="molecule type" value="mRNA"/>
</dbReference>
<dbReference type="CCDS" id="CCDS100.2"/>
<dbReference type="RefSeq" id="NP_079256.4">
    <property type="nucleotide sequence ID" value="NM_024980.4"/>
</dbReference>
<dbReference type="SMR" id="Q5UAW9"/>
<dbReference type="BioGRID" id="123089">
    <property type="interactions" value="1"/>
</dbReference>
<dbReference type="FunCoup" id="Q5UAW9">
    <property type="interactions" value="115"/>
</dbReference>
<dbReference type="STRING" id="9606.ENSP00000366628"/>
<dbReference type="ChEMBL" id="CHEMBL4523875"/>
<dbReference type="iPTMnet" id="Q5UAW9"/>
<dbReference type="PhosphoSitePlus" id="Q5UAW9"/>
<dbReference type="BioMuta" id="GPR157"/>
<dbReference type="DMDM" id="73621015"/>
<dbReference type="jPOST" id="Q5UAW9"/>
<dbReference type="MassIVE" id="Q5UAW9"/>
<dbReference type="PaxDb" id="9606-ENSP00000366628"/>
<dbReference type="PeptideAtlas" id="Q5UAW9"/>
<dbReference type="ProteomicsDB" id="65242"/>
<dbReference type="Antibodypedia" id="27668">
    <property type="antibodies" value="131 antibodies from 23 providers"/>
</dbReference>
<dbReference type="DNASU" id="80045"/>
<dbReference type="Ensembl" id="ENST00000377411.5">
    <property type="protein sequence ID" value="ENSP00000366628.4"/>
    <property type="gene ID" value="ENSG00000180758.12"/>
</dbReference>
<dbReference type="GeneID" id="80045"/>
<dbReference type="KEGG" id="hsa:80045"/>
<dbReference type="MANE-Select" id="ENST00000377411.5">
    <property type="protein sequence ID" value="ENSP00000366628.4"/>
    <property type="RefSeq nucleotide sequence ID" value="NM_024980.5"/>
    <property type="RefSeq protein sequence ID" value="NP_079256.4"/>
</dbReference>
<dbReference type="UCSC" id="uc001apq.2">
    <property type="organism name" value="human"/>
</dbReference>
<dbReference type="AGR" id="HGNC:23687"/>
<dbReference type="CTD" id="80045"/>
<dbReference type="DisGeNET" id="80045"/>
<dbReference type="GeneCards" id="GPR157"/>
<dbReference type="HGNC" id="HGNC:23687">
    <property type="gene designation" value="GPR157"/>
</dbReference>
<dbReference type="HPA" id="ENSG00000180758">
    <property type="expression patterns" value="Tissue enhanced (skeletal)"/>
</dbReference>
<dbReference type="MIM" id="620860">
    <property type="type" value="gene"/>
</dbReference>
<dbReference type="neXtProt" id="NX_Q5UAW9"/>
<dbReference type="OpenTargets" id="ENSG00000180758"/>
<dbReference type="PharmGKB" id="PA134876230"/>
<dbReference type="VEuPathDB" id="HostDB:ENSG00000180758"/>
<dbReference type="eggNOG" id="ENOG502QU1X">
    <property type="taxonomic scope" value="Eukaryota"/>
</dbReference>
<dbReference type="GeneTree" id="ENSGT00390000012992"/>
<dbReference type="HOGENOM" id="CLU_052670_0_0_1"/>
<dbReference type="InParanoid" id="Q5UAW9"/>
<dbReference type="OMA" id="CIMFVLF"/>
<dbReference type="OrthoDB" id="100006at2759"/>
<dbReference type="PAN-GO" id="Q5UAW9">
    <property type="GO annotations" value="3 GO annotations based on evolutionary models"/>
</dbReference>
<dbReference type="PhylomeDB" id="Q5UAW9"/>
<dbReference type="TreeFam" id="TF330856"/>
<dbReference type="PathwayCommons" id="Q5UAW9"/>
<dbReference type="BioGRID-ORCS" id="80045">
    <property type="hits" value="8 hits in 1139 CRISPR screens"/>
</dbReference>
<dbReference type="ChiTaRS" id="GPR157">
    <property type="organism name" value="human"/>
</dbReference>
<dbReference type="GeneWiki" id="GPR157"/>
<dbReference type="GenomeRNAi" id="80045"/>
<dbReference type="Pharos" id="Q5UAW9">
    <property type="development level" value="Tdark"/>
</dbReference>
<dbReference type="PRO" id="PR:Q5UAW9"/>
<dbReference type="Proteomes" id="UP000005640">
    <property type="component" value="Chromosome 1"/>
</dbReference>
<dbReference type="RNAct" id="Q5UAW9">
    <property type="molecule type" value="protein"/>
</dbReference>
<dbReference type="Bgee" id="ENSG00000180758">
    <property type="expression patterns" value="Expressed in esophagus squamous epithelium and 138 other cell types or tissues"/>
</dbReference>
<dbReference type="ExpressionAtlas" id="Q5UAW9">
    <property type="expression patterns" value="baseline and differential"/>
</dbReference>
<dbReference type="GO" id="GO:0060170">
    <property type="term" value="C:ciliary membrane"/>
    <property type="evidence" value="ECO:0000250"/>
    <property type="project" value="UniProtKB"/>
</dbReference>
<dbReference type="GO" id="GO:0005886">
    <property type="term" value="C:plasma membrane"/>
    <property type="evidence" value="ECO:0000318"/>
    <property type="project" value="GO_Central"/>
</dbReference>
<dbReference type="GO" id="GO:0004930">
    <property type="term" value="F:G protein-coupled receptor activity"/>
    <property type="evidence" value="ECO:0000250"/>
    <property type="project" value="UniProtKB"/>
</dbReference>
<dbReference type="GO" id="GO:0007189">
    <property type="term" value="P:adenylate cyclase-activating G protein-coupled receptor signaling pathway"/>
    <property type="evidence" value="ECO:0000318"/>
    <property type="project" value="GO_Central"/>
</dbReference>
<dbReference type="GO" id="GO:0007166">
    <property type="term" value="P:cell surface receptor signaling pathway"/>
    <property type="evidence" value="ECO:0007669"/>
    <property type="project" value="InterPro"/>
</dbReference>
<dbReference type="GO" id="GO:0048512">
    <property type="term" value="P:circadian behavior"/>
    <property type="evidence" value="ECO:0007669"/>
    <property type="project" value="Ensembl"/>
</dbReference>
<dbReference type="GO" id="GO:0007200">
    <property type="term" value="P:phospholipase C-activating G protein-coupled receptor signaling pathway"/>
    <property type="evidence" value="ECO:0000250"/>
    <property type="project" value="UniProtKB"/>
</dbReference>
<dbReference type="GO" id="GO:0060019">
    <property type="term" value="P:radial glial cell differentiation"/>
    <property type="evidence" value="ECO:0000250"/>
    <property type="project" value="UniProtKB"/>
</dbReference>
<dbReference type="FunFam" id="1.20.1070.10:FF:000301">
    <property type="entry name" value="G-protein coupled receptor 157"/>
    <property type="match status" value="1"/>
</dbReference>
<dbReference type="Gene3D" id="1.20.1070.10">
    <property type="entry name" value="Rhodopsin 7-helix transmembrane proteins"/>
    <property type="match status" value="1"/>
</dbReference>
<dbReference type="InterPro" id="IPR022343">
    <property type="entry name" value="GCR1-cAMP_receptor"/>
</dbReference>
<dbReference type="InterPro" id="IPR017981">
    <property type="entry name" value="GPCR_2-like_7TM"/>
</dbReference>
<dbReference type="InterPro" id="IPR000832">
    <property type="entry name" value="GPCR_2_secretin-like"/>
</dbReference>
<dbReference type="InterPro" id="IPR017452">
    <property type="entry name" value="GPCR_Rhodpsn_7TM"/>
</dbReference>
<dbReference type="PANTHER" id="PTHR23112">
    <property type="entry name" value="G PROTEIN-COUPLED RECEPTOR 157-RELATED"/>
    <property type="match status" value="1"/>
</dbReference>
<dbReference type="PANTHER" id="PTHR23112:SF47">
    <property type="entry name" value="G-PROTEIN COUPLED RECEPTOR 157"/>
    <property type="match status" value="1"/>
</dbReference>
<dbReference type="Pfam" id="PF00002">
    <property type="entry name" value="7tm_2"/>
    <property type="match status" value="1"/>
</dbReference>
<dbReference type="PRINTS" id="PR02001">
    <property type="entry name" value="GCR1CAMPR"/>
</dbReference>
<dbReference type="SUPFAM" id="SSF81321">
    <property type="entry name" value="Family A G protein-coupled receptor-like"/>
    <property type="match status" value="1"/>
</dbReference>
<dbReference type="PROSITE" id="PS50261">
    <property type="entry name" value="G_PROTEIN_RECEP_F2_4"/>
    <property type="match status" value="1"/>
</dbReference>
<keyword id="KW-1003">Cell membrane</keyword>
<keyword id="KW-0966">Cell projection</keyword>
<keyword id="KW-0217">Developmental protein</keyword>
<keyword id="KW-0221">Differentiation</keyword>
<keyword id="KW-0297">G-protein coupled receptor</keyword>
<keyword id="KW-0472">Membrane</keyword>
<keyword id="KW-1267">Proteomics identification</keyword>
<keyword id="KW-0675">Receptor</keyword>
<keyword id="KW-1185">Reference proteome</keyword>
<keyword id="KW-0807">Transducer</keyword>
<keyword id="KW-0812">Transmembrane</keyword>
<keyword id="KW-1133">Transmembrane helix</keyword>
<proteinExistence type="evidence at protein level"/>
<gene>
    <name type="primary">GPR157</name>
</gene>
<name>GP157_HUMAN</name>
<feature type="chain" id="PRO_0000070339" description="G-protein coupled receptor 157">
    <location>
        <begin position="1"/>
        <end position="335"/>
    </location>
</feature>
<feature type="topological domain" description="Extracellular" evidence="2">
    <location>
        <begin position="1"/>
        <end position="15"/>
    </location>
</feature>
<feature type="transmembrane region" description="Helical; Name=1" evidence="2">
    <location>
        <begin position="16"/>
        <end position="36"/>
    </location>
</feature>
<feature type="topological domain" description="Cytoplasmic" evidence="2">
    <location>
        <begin position="37"/>
        <end position="48"/>
    </location>
</feature>
<feature type="transmembrane region" description="Helical; Name=2" evidence="2">
    <location>
        <begin position="49"/>
        <end position="69"/>
    </location>
</feature>
<feature type="topological domain" description="Extracellular" evidence="2">
    <location>
        <begin position="70"/>
        <end position="87"/>
    </location>
</feature>
<feature type="transmembrane region" description="Helical; Name=3" evidence="2">
    <location>
        <begin position="88"/>
        <end position="108"/>
    </location>
</feature>
<feature type="topological domain" description="Cytoplasmic" evidence="2">
    <location>
        <begin position="109"/>
        <end position="119"/>
    </location>
</feature>
<feature type="transmembrane region" description="Helical; Name=4" evidence="2">
    <location>
        <begin position="120"/>
        <end position="140"/>
    </location>
</feature>
<feature type="topological domain" description="Extracellular" evidence="2">
    <location>
        <begin position="141"/>
        <end position="166"/>
    </location>
</feature>
<feature type="transmembrane region" description="Helical; Name=5" evidence="2">
    <location>
        <begin position="167"/>
        <end position="187"/>
    </location>
</feature>
<feature type="topological domain" description="Cytoplasmic" evidence="2">
    <location>
        <begin position="188"/>
        <end position="226"/>
    </location>
</feature>
<feature type="transmembrane region" description="Helical; Name=6" evidence="2">
    <location>
        <begin position="227"/>
        <end position="247"/>
    </location>
</feature>
<feature type="topological domain" description="Extracellular" evidence="2">
    <location>
        <begin position="248"/>
        <end position="258"/>
    </location>
</feature>
<feature type="transmembrane region" description="Helical; Name=7" evidence="2">
    <location>
        <begin position="259"/>
        <end position="279"/>
    </location>
</feature>
<feature type="topological domain" description="Cytoplasmic" evidence="2">
    <location>
        <begin position="280"/>
        <end position="335"/>
    </location>
</feature>
<feature type="region of interest" description="Disordered" evidence="3">
    <location>
        <begin position="300"/>
        <end position="335"/>
    </location>
</feature>
<feature type="compositionally biased region" description="Polar residues" evidence="3">
    <location>
        <begin position="320"/>
        <end position="335"/>
    </location>
</feature>
<feature type="sequence conflict" description="In Ref. 3; BAB13982." evidence="4" ref="3">
    <original>N</original>
    <variation>D</variation>
    <location>
        <position position="71"/>
    </location>
</feature>
<evidence type="ECO:0000250" key="1">
    <source>
        <dbReference type="UniProtKB" id="Q8C206"/>
    </source>
</evidence>
<evidence type="ECO:0000255" key="2"/>
<evidence type="ECO:0000256" key="3">
    <source>
        <dbReference type="SAM" id="MobiDB-lite"/>
    </source>
</evidence>
<evidence type="ECO:0000305" key="4"/>
<sequence length="335" mass="36623">MQPSPPPTELVPSERAVVLLSCALSALGSGLLVATHALWPDLRSRARRLLLFLSLADLLSAASYFYGVLQNFAGPSWDCVLQGALSTFANTSSFFWTVAIALYLYLSIVRAARGPRTDRLLWAFHVVSWGVPLVITVAAVALKKIGYDASDVSVGWCWIDLEAKDHVLWMLLTGKLWEMLAYVLLPLLYLLVRKHINRAHTALSEYRPILSQEHRLLRHSSMADKKLVLIPLIFIGLRVWSTVRFVLTLCGSPAVQTPVLVVLHGIGNTFQGGANCIMFVLCTRAVRTRLFSLCCCCCSSQPPTKSPAGTPKAPAPSKPGESQESQGTPGELPST</sequence>
<organism>
    <name type="scientific">Homo sapiens</name>
    <name type="common">Human</name>
    <dbReference type="NCBI Taxonomy" id="9606"/>
    <lineage>
        <taxon>Eukaryota</taxon>
        <taxon>Metazoa</taxon>
        <taxon>Chordata</taxon>
        <taxon>Craniata</taxon>
        <taxon>Vertebrata</taxon>
        <taxon>Euteleostomi</taxon>
        <taxon>Mammalia</taxon>
        <taxon>Eutheria</taxon>
        <taxon>Euarchontoglires</taxon>
        <taxon>Primates</taxon>
        <taxon>Haplorrhini</taxon>
        <taxon>Catarrhini</taxon>
        <taxon>Hominidae</taxon>
        <taxon>Homo</taxon>
    </lineage>
</organism>
<reference key="1">
    <citation type="submission" date="2004-09" db="EMBL/GenBank/DDBJ databases">
        <title>Complete coding sequence of GPR157.</title>
        <authorList>
            <person name="Bonner T.I."/>
            <person name="Kauffman D."/>
            <person name="Nagle J.W."/>
        </authorList>
    </citation>
    <scope>NUCLEOTIDE SEQUENCE [MRNA]</scope>
    <source>
        <tissue>Placenta</tissue>
        <tissue>Prostate</tissue>
    </source>
</reference>
<reference key="2">
    <citation type="journal article" date="2006" name="Nature">
        <title>The DNA sequence and biological annotation of human chromosome 1.</title>
        <authorList>
            <person name="Gregory S.G."/>
            <person name="Barlow K.F."/>
            <person name="McLay K.E."/>
            <person name="Kaul R."/>
            <person name="Swarbreck D."/>
            <person name="Dunham A."/>
            <person name="Scott C.E."/>
            <person name="Howe K.L."/>
            <person name="Woodfine K."/>
            <person name="Spencer C.C.A."/>
            <person name="Jones M.C."/>
            <person name="Gillson C."/>
            <person name="Searle S."/>
            <person name="Zhou Y."/>
            <person name="Kokocinski F."/>
            <person name="McDonald L."/>
            <person name="Evans R."/>
            <person name="Phillips K."/>
            <person name="Atkinson A."/>
            <person name="Cooper R."/>
            <person name="Jones C."/>
            <person name="Hall R.E."/>
            <person name="Andrews T.D."/>
            <person name="Lloyd C."/>
            <person name="Ainscough R."/>
            <person name="Almeida J.P."/>
            <person name="Ambrose K.D."/>
            <person name="Anderson F."/>
            <person name="Andrew R.W."/>
            <person name="Ashwell R.I.S."/>
            <person name="Aubin K."/>
            <person name="Babbage A.K."/>
            <person name="Bagguley C.L."/>
            <person name="Bailey J."/>
            <person name="Beasley H."/>
            <person name="Bethel G."/>
            <person name="Bird C.P."/>
            <person name="Bray-Allen S."/>
            <person name="Brown J.Y."/>
            <person name="Brown A.J."/>
            <person name="Buckley D."/>
            <person name="Burton J."/>
            <person name="Bye J."/>
            <person name="Carder C."/>
            <person name="Chapman J.C."/>
            <person name="Clark S.Y."/>
            <person name="Clarke G."/>
            <person name="Clee C."/>
            <person name="Cobley V."/>
            <person name="Collier R.E."/>
            <person name="Corby N."/>
            <person name="Coville G.J."/>
            <person name="Davies J."/>
            <person name="Deadman R."/>
            <person name="Dunn M."/>
            <person name="Earthrowl M."/>
            <person name="Ellington A.G."/>
            <person name="Errington H."/>
            <person name="Frankish A."/>
            <person name="Frankland J."/>
            <person name="French L."/>
            <person name="Garner P."/>
            <person name="Garnett J."/>
            <person name="Gay L."/>
            <person name="Ghori M.R.J."/>
            <person name="Gibson R."/>
            <person name="Gilby L.M."/>
            <person name="Gillett W."/>
            <person name="Glithero R.J."/>
            <person name="Grafham D.V."/>
            <person name="Griffiths C."/>
            <person name="Griffiths-Jones S."/>
            <person name="Grocock R."/>
            <person name="Hammond S."/>
            <person name="Harrison E.S.I."/>
            <person name="Hart E."/>
            <person name="Haugen E."/>
            <person name="Heath P.D."/>
            <person name="Holmes S."/>
            <person name="Holt K."/>
            <person name="Howden P.J."/>
            <person name="Hunt A.R."/>
            <person name="Hunt S.E."/>
            <person name="Hunter G."/>
            <person name="Isherwood J."/>
            <person name="James R."/>
            <person name="Johnson C."/>
            <person name="Johnson D."/>
            <person name="Joy A."/>
            <person name="Kay M."/>
            <person name="Kershaw J.K."/>
            <person name="Kibukawa M."/>
            <person name="Kimberley A.M."/>
            <person name="King A."/>
            <person name="Knights A.J."/>
            <person name="Lad H."/>
            <person name="Laird G."/>
            <person name="Lawlor S."/>
            <person name="Leongamornlert D.A."/>
            <person name="Lloyd D.M."/>
            <person name="Loveland J."/>
            <person name="Lovell J."/>
            <person name="Lush M.J."/>
            <person name="Lyne R."/>
            <person name="Martin S."/>
            <person name="Mashreghi-Mohammadi M."/>
            <person name="Matthews L."/>
            <person name="Matthews N.S.W."/>
            <person name="McLaren S."/>
            <person name="Milne S."/>
            <person name="Mistry S."/>
            <person name="Moore M.J.F."/>
            <person name="Nickerson T."/>
            <person name="O'Dell C.N."/>
            <person name="Oliver K."/>
            <person name="Palmeiri A."/>
            <person name="Palmer S.A."/>
            <person name="Parker A."/>
            <person name="Patel D."/>
            <person name="Pearce A.V."/>
            <person name="Peck A.I."/>
            <person name="Pelan S."/>
            <person name="Phelps K."/>
            <person name="Phillimore B.J."/>
            <person name="Plumb R."/>
            <person name="Rajan J."/>
            <person name="Raymond C."/>
            <person name="Rouse G."/>
            <person name="Saenphimmachak C."/>
            <person name="Sehra H.K."/>
            <person name="Sheridan E."/>
            <person name="Shownkeen R."/>
            <person name="Sims S."/>
            <person name="Skuce C.D."/>
            <person name="Smith M."/>
            <person name="Steward C."/>
            <person name="Subramanian S."/>
            <person name="Sycamore N."/>
            <person name="Tracey A."/>
            <person name="Tromans A."/>
            <person name="Van Helmond Z."/>
            <person name="Wall M."/>
            <person name="Wallis J.M."/>
            <person name="White S."/>
            <person name="Whitehead S.L."/>
            <person name="Wilkinson J.E."/>
            <person name="Willey D.L."/>
            <person name="Williams H."/>
            <person name="Wilming L."/>
            <person name="Wray P.W."/>
            <person name="Wu Z."/>
            <person name="Coulson A."/>
            <person name="Vaudin M."/>
            <person name="Sulston J.E."/>
            <person name="Durbin R.M."/>
            <person name="Hubbard T."/>
            <person name="Wooster R."/>
            <person name="Dunham I."/>
            <person name="Carter N.P."/>
            <person name="McVean G."/>
            <person name="Ross M.T."/>
            <person name="Harrow J."/>
            <person name="Olson M.V."/>
            <person name="Beck S."/>
            <person name="Rogers J."/>
            <person name="Bentley D.R."/>
        </authorList>
    </citation>
    <scope>NUCLEOTIDE SEQUENCE [LARGE SCALE GENOMIC DNA]</scope>
</reference>
<reference key="3">
    <citation type="journal article" date="2004" name="Nat. Genet.">
        <title>Complete sequencing and characterization of 21,243 full-length human cDNAs.</title>
        <authorList>
            <person name="Ota T."/>
            <person name="Suzuki Y."/>
            <person name="Nishikawa T."/>
            <person name="Otsuki T."/>
            <person name="Sugiyama T."/>
            <person name="Irie R."/>
            <person name="Wakamatsu A."/>
            <person name="Hayashi K."/>
            <person name="Sato H."/>
            <person name="Nagai K."/>
            <person name="Kimura K."/>
            <person name="Makita H."/>
            <person name="Sekine M."/>
            <person name="Obayashi M."/>
            <person name="Nishi T."/>
            <person name="Shibahara T."/>
            <person name="Tanaka T."/>
            <person name="Ishii S."/>
            <person name="Yamamoto J."/>
            <person name="Saito K."/>
            <person name="Kawai Y."/>
            <person name="Isono Y."/>
            <person name="Nakamura Y."/>
            <person name="Nagahari K."/>
            <person name="Murakami K."/>
            <person name="Yasuda T."/>
            <person name="Iwayanagi T."/>
            <person name="Wagatsuma M."/>
            <person name="Shiratori A."/>
            <person name="Sudo H."/>
            <person name="Hosoiri T."/>
            <person name="Kaku Y."/>
            <person name="Kodaira H."/>
            <person name="Kondo H."/>
            <person name="Sugawara M."/>
            <person name="Takahashi M."/>
            <person name="Kanda K."/>
            <person name="Yokoi T."/>
            <person name="Furuya T."/>
            <person name="Kikkawa E."/>
            <person name="Omura Y."/>
            <person name="Abe K."/>
            <person name="Kamihara K."/>
            <person name="Katsuta N."/>
            <person name="Sato K."/>
            <person name="Tanikawa M."/>
            <person name="Yamazaki M."/>
            <person name="Ninomiya K."/>
            <person name="Ishibashi T."/>
            <person name="Yamashita H."/>
            <person name="Murakawa K."/>
            <person name="Fujimori K."/>
            <person name="Tanai H."/>
            <person name="Kimata M."/>
            <person name="Watanabe M."/>
            <person name="Hiraoka S."/>
            <person name="Chiba Y."/>
            <person name="Ishida S."/>
            <person name="Ono Y."/>
            <person name="Takiguchi S."/>
            <person name="Watanabe S."/>
            <person name="Yosida M."/>
            <person name="Hotuta T."/>
            <person name="Kusano J."/>
            <person name="Kanehori K."/>
            <person name="Takahashi-Fujii A."/>
            <person name="Hara H."/>
            <person name="Tanase T.-O."/>
            <person name="Nomura Y."/>
            <person name="Togiya S."/>
            <person name="Komai F."/>
            <person name="Hara R."/>
            <person name="Takeuchi K."/>
            <person name="Arita M."/>
            <person name="Imose N."/>
            <person name="Musashino K."/>
            <person name="Yuuki H."/>
            <person name="Oshima A."/>
            <person name="Sasaki N."/>
            <person name="Aotsuka S."/>
            <person name="Yoshikawa Y."/>
            <person name="Matsunawa H."/>
            <person name="Ichihara T."/>
            <person name="Shiohata N."/>
            <person name="Sano S."/>
            <person name="Moriya S."/>
            <person name="Momiyama H."/>
            <person name="Satoh N."/>
            <person name="Takami S."/>
            <person name="Terashima Y."/>
            <person name="Suzuki O."/>
            <person name="Nakagawa S."/>
            <person name="Senoh A."/>
            <person name="Mizoguchi H."/>
            <person name="Goto Y."/>
            <person name="Shimizu F."/>
            <person name="Wakebe H."/>
            <person name="Hishigaki H."/>
            <person name="Watanabe T."/>
            <person name="Sugiyama A."/>
            <person name="Takemoto M."/>
            <person name="Kawakami B."/>
            <person name="Yamazaki M."/>
            <person name="Watanabe K."/>
            <person name="Kumagai A."/>
            <person name="Itakura S."/>
            <person name="Fukuzumi Y."/>
            <person name="Fujimori Y."/>
            <person name="Komiyama M."/>
            <person name="Tashiro H."/>
            <person name="Tanigami A."/>
            <person name="Fujiwara T."/>
            <person name="Ono T."/>
            <person name="Yamada K."/>
            <person name="Fujii Y."/>
            <person name="Ozaki K."/>
            <person name="Hirao M."/>
            <person name="Ohmori Y."/>
            <person name="Kawabata A."/>
            <person name="Hikiji T."/>
            <person name="Kobatake N."/>
            <person name="Inagaki H."/>
            <person name="Ikema Y."/>
            <person name="Okamoto S."/>
            <person name="Okitani R."/>
            <person name="Kawakami T."/>
            <person name="Noguchi S."/>
            <person name="Itoh T."/>
            <person name="Shigeta K."/>
            <person name="Senba T."/>
            <person name="Matsumura K."/>
            <person name="Nakajima Y."/>
            <person name="Mizuno T."/>
            <person name="Morinaga M."/>
            <person name="Sasaki M."/>
            <person name="Togashi T."/>
            <person name="Oyama M."/>
            <person name="Hata H."/>
            <person name="Watanabe M."/>
            <person name="Komatsu T."/>
            <person name="Mizushima-Sugano J."/>
            <person name="Satoh T."/>
            <person name="Shirai Y."/>
            <person name="Takahashi Y."/>
            <person name="Nakagawa K."/>
            <person name="Okumura K."/>
            <person name="Nagase T."/>
            <person name="Nomura N."/>
            <person name="Kikuchi H."/>
            <person name="Masuho Y."/>
            <person name="Yamashita R."/>
            <person name="Nakai K."/>
            <person name="Yada T."/>
            <person name="Nakamura Y."/>
            <person name="Ohara O."/>
            <person name="Isogai T."/>
            <person name="Sugano S."/>
        </authorList>
    </citation>
    <scope>NUCLEOTIDE SEQUENCE [LARGE SCALE MRNA] OF 1-127</scope>
    <source>
        <tissue>Mammary gland</tissue>
    </source>
</reference>
<comment type="function">
    <text evidence="1">Orphan receptor that promotes neuronal differentiation of radial glial progenitors (RGPs). The activity of this receptor is mediated by a G(q)-protein that activates a phosphatidylinositol-calcium second messenger.</text>
</comment>
<comment type="subcellular location">
    <subcellularLocation>
        <location evidence="1">Cell projection</location>
        <location evidence="1">Cilium membrane</location>
        <topology evidence="2">Multi-pass membrane protein</topology>
    </subcellularLocation>
    <text evidence="1">Expressed in the primary cilia of radial glial progenitors (RGPs) exposed to the cerebrospinal fluid.</text>
</comment>
<comment type="similarity">
    <text evidence="4">Belongs to the G-protein coupled receptor 2 family.</text>
</comment>
<comment type="sequence caution" evidence="4">
    <conflict type="miscellaneous discrepancy">
        <sequence resource="EMBL-CDS" id="BAB13982"/>
    </conflict>
    <text>Intron retention.</text>
</comment>